<feature type="chain" id="PRO_0000223146" description="UPF0329 protein ECU01_0110/ECU01_1500/ECU08_0040">
    <location>
        <begin position="1"/>
        <end position="592"/>
    </location>
</feature>
<feature type="region of interest" description="Disordered" evidence="1">
    <location>
        <begin position="306"/>
        <end position="404"/>
    </location>
</feature>
<feature type="compositionally biased region" description="Basic and acidic residues" evidence="1">
    <location>
        <begin position="306"/>
        <end position="339"/>
    </location>
</feature>
<feature type="compositionally biased region" description="Basic and acidic residues" evidence="1">
    <location>
        <begin position="353"/>
        <end position="362"/>
    </location>
</feature>
<keyword id="KW-1185">Reference proteome</keyword>
<protein>
    <recommendedName>
        <fullName>UPF0329 protein ECU01_0110/ECU01_1500/ECU08_0040</fullName>
    </recommendedName>
</protein>
<sequence length="592" mass="68523">MWWRHAPWVLIVVVDVMYCSSEEENAVSFELDPDNETIIFPFAFGGDNIIMLPTMKYSDYKRSTRYMKDPEFLLYSLSSVVWDLVVGHVSYKNDDRFDKLFDKMMSKYLNNVSINASRIYIRGNKTFSEMLEMVYERIFECDSKGSRQMARYGESLIREIDSKMESMPSEMSEEEKEKMRSDLNDDKKYVESFRDTEKWRQIVEAEKMVCNACKEICLGLKEEELMGLFAEGSMRKALKAKLGEEKASHRGYLECAFVDIKLLLDAHKEHGGDVTKELVMQMLLGKKGKNIDKRYINKVANVVKERQRRREREIEKNMKELMRDEEKAKSKEKAKSKEKAKSKKKGESVGVSEAKEEEKKESETEEVEASEEVGIPSVEVGGARRKTGKKSEGGRKRYKIHRRVSRWRKSPEKIKDEWDKGSEEKWKGRSLEEIKEQKVFHDIMGVLELLRSEDADKFFMDTGKYTKGGSERQRMVAIGVLESGGKRMAGVVEVGTFKDSSSGCPVVYHLMFRVTGIEGMGDVMSPEFAEANDIEKIDKNREYQDEGMFVYPKGVTFETVKETGSFQIVWENPSDTSEVLRRLTIQRRPCVI</sequence>
<name>Y111_ENCCU</name>
<reference key="1">
    <citation type="journal article" date="2001" name="Genome Res.">
        <title>Sequence and analysis of chromosome I of the amitochondriate intracellular parasite Encephalitozoon cuniculi (Microspora).</title>
        <authorList>
            <person name="Peyret P."/>
            <person name="Katinka M.D."/>
            <person name="Duprat S."/>
            <person name="Duffieux F."/>
            <person name="Barbe V."/>
            <person name="Barbazanges M."/>
            <person name="Weissenbach J."/>
            <person name="Saurin W."/>
            <person name="Vivares C.P."/>
        </authorList>
    </citation>
    <scope>NUCLEOTIDE SEQUENCE [LARGE SCALE GENOMIC DNA]</scope>
    <source>
        <strain>GB-M1</strain>
    </source>
</reference>
<reference key="2">
    <citation type="journal article" date="2001" name="Nature">
        <title>Genome sequence and gene compaction of the eukaryote parasite Encephalitozoon cuniculi.</title>
        <authorList>
            <person name="Katinka M.D."/>
            <person name="Duprat S."/>
            <person name="Cornillot E."/>
            <person name="Metenier G."/>
            <person name="Thomarat F."/>
            <person name="Prensier G."/>
            <person name="Barbe V."/>
            <person name="Peyretaillade E."/>
            <person name="Brottier P."/>
            <person name="Wincker P."/>
            <person name="Delbac F."/>
            <person name="El Alaoui H."/>
            <person name="Peyret P."/>
            <person name="Saurin W."/>
            <person name="Gouy M."/>
            <person name="Weissenbach J."/>
            <person name="Vivares C.P."/>
        </authorList>
    </citation>
    <scope>NUCLEOTIDE SEQUENCE [LARGE SCALE GENOMIC DNA]</scope>
    <source>
        <strain>GB-M1</strain>
    </source>
</reference>
<proteinExistence type="inferred from homology"/>
<comment type="similarity">
    <text evidence="2">Belongs to the UPF0329 family.</text>
</comment>
<gene>
    <name type="ordered locus">ECU01_0110</name>
</gene>
<gene>
    <name type="ordered locus">ECU01_1500</name>
</gene>
<gene>
    <name type="ordered locus">ECU08_0040</name>
</gene>
<evidence type="ECO:0000256" key="1">
    <source>
        <dbReference type="SAM" id="MobiDB-lite"/>
    </source>
</evidence>
<evidence type="ECO:0000305" key="2"/>
<dbReference type="EMBL" id="AL391737">
    <property type="protein sequence ID" value="CAD24883.1"/>
    <property type="molecule type" value="Genomic_DNA"/>
</dbReference>
<dbReference type="EMBL" id="AL391737">
    <property type="protein sequence ID" value="CAD25021.1"/>
    <property type="molecule type" value="Genomic_DNA"/>
</dbReference>
<dbReference type="EMBL" id="AL590448">
    <property type="protein sequence ID" value="CAD26309.1"/>
    <property type="molecule type" value="Genomic_DNA"/>
</dbReference>
<dbReference type="RefSeq" id="NP_001402099.1">
    <property type="nucleotide sequence ID" value="NM_001415162.1"/>
</dbReference>
<dbReference type="RefSeq" id="NP_597133.1">
    <property type="nucleotide sequence ID" value="NM_001041742.1"/>
</dbReference>
<dbReference type="RefSeq" id="XP_965848.1">
    <property type="nucleotide sequence ID" value="XM_960755.1"/>
</dbReference>
<dbReference type="RefSeq" id="XP_965986.1">
    <property type="nucleotide sequence ID" value="XM_960893.1"/>
</dbReference>
<dbReference type="SMR" id="Q8STB5"/>
<dbReference type="STRING" id="284813.Q8STB5"/>
<dbReference type="GeneID" id="859555"/>
<dbReference type="GeneID" id="860184"/>
<dbReference type="KEGG" id="ecu:ECU08_0040"/>
<dbReference type="VEuPathDB" id="MicrosporidiaDB:ECU01_0110"/>
<dbReference type="VEuPathDB" id="MicrosporidiaDB:ECU01_1500"/>
<dbReference type="VEuPathDB" id="MicrosporidiaDB:ECU08_0040"/>
<dbReference type="HOGENOM" id="CLU_035434_0_0_1"/>
<dbReference type="InParanoid" id="Q8STB5"/>
<dbReference type="OrthoDB" id="2162691at2759"/>
<dbReference type="Proteomes" id="UP000000819">
    <property type="component" value="Chromosome I"/>
</dbReference>
<dbReference type="Proteomes" id="UP000000819">
    <property type="component" value="Chromosome VIII"/>
</dbReference>
<dbReference type="InterPro" id="IPR022115">
    <property type="entry name" value="DUF3654"/>
</dbReference>
<dbReference type="InterPro" id="IPR011667">
    <property type="entry name" value="UPF0329"/>
</dbReference>
<dbReference type="Pfam" id="PF07753">
    <property type="entry name" value="DUF1609"/>
    <property type="match status" value="1"/>
</dbReference>
<dbReference type="Pfam" id="PF12376">
    <property type="entry name" value="DUF3654"/>
    <property type="match status" value="1"/>
</dbReference>
<organism>
    <name type="scientific">Encephalitozoon cuniculi (strain GB-M1)</name>
    <name type="common">Microsporidian parasite</name>
    <dbReference type="NCBI Taxonomy" id="284813"/>
    <lineage>
        <taxon>Eukaryota</taxon>
        <taxon>Fungi</taxon>
        <taxon>Fungi incertae sedis</taxon>
        <taxon>Microsporidia</taxon>
        <taxon>Unikaryonidae</taxon>
        <taxon>Encephalitozoon</taxon>
    </lineage>
</organism>
<accession>Q8STB5</accession>